<name>COQ7_FRAP2</name>
<accession>B0TZT4</accession>
<protein>
    <recommendedName>
        <fullName evidence="1">3-demethoxyubiquinol 3-hydroxylase</fullName>
        <shortName evidence="1">DMQ hydroxylase</shortName>
        <ecNumber evidence="1">1.14.99.60</ecNumber>
    </recommendedName>
    <alternativeName>
        <fullName evidence="1">2-nonaprenyl-3-methyl-6-methoxy-1,4-benzoquinol hydroxylase</fullName>
    </alternativeName>
</protein>
<proteinExistence type="inferred from homology"/>
<keyword id="KW-1003">Cell membrane</keyword>
<keyword id="KW-0408">Iron</keyword>
<keyword id="KW-0472">Membrane</keyword>
<keyword id="KW-0479">Metal-binding</keyword>
<keyword id="KW-0503">Monooxygenase</keyword>
<keyword id="KW-0560">Oxidoreductase</keyword>
<keyword id="KW-0831">Ubiquinone biosynthesis</keyword>
<gene>
    <name evidence="1" type="primary">coq7</name>
    <name type="ordered locus">Fphi_1623</name>
</gene>
<organism>
    <name type="scientific">Francisella philomiragia subsp. philomiragia (strain ATCC 25017 / CCUG 19701 / FSC 153 / O#319-036)</name>
    <dbReference type="NCBI Taxonomy" id="484022"/>
    <lineage>
        <taxon>Bacteria</taxon>
        <taxon>Pseudomonadati</taxon>
        <taxon>Pseudomonadota</taxon>
        <taxon>Gammaproteobacteria</taxon>
        <taxon>Thiotrichales</taxon>
        <taxon>Francisellaceae</taxon>
        <taxon>Francisella</taxon>
    </lineage>
</organism>
<feature type="chain" id="PRO_0000338684" description="3-demethoxyubiquinol 3-hydroxylase">
    <location>
        <begin position="1"/>
        <end position="211"/>
    </location>
</feature>
<feature type="region of interest" description="Disordered" evidence="2">
    <location>
        <begin position="22"/>
        <end position="43"/>
    </location>
</feature>
<feature type="compositionally biased region" description="Polar residues" evidence="2">
    <location>
        <begin position="28"/>
        <end position="42"/>
    </location>
</feature>
<feature type="binding site" evidence="1">
    <location>
        <position position="60"/>
    </location>
    <ligand>
        <name>Fe cation</name>
        <dbReference type="ChEBI" id="CHEBI:24875"/>
        <label>1</label>
    </ligand>
</feature>
<feature type="binding site" evidence="1">
    <location>
        <position position="90"/>
    </location>
    <ligand>
        <name>Fe cation</name>
        <dbReference type="ChEBI" id="CHEBI:24875"/>
        <label>1</label>
    </ligand>
</feature>
<feature type="binding site" evidence="1">
    <location>
        <position position="90"/>
    </location>
    <ligand>
        <name>Fe cation</name>
        <dbReference type="ChEBI" id="CHEBI:24875"/>
        <label>2</label>
    </ligand>
</feature>
<feature type="binding site" evidence="1">
    <location>
        <position position="93"/>
    </location>
    <ligand>
        <name>Fe cation</name>
        <dbReference type="ChEBI" id="CHEBI:24875"/>
        <label>1</label>
    </ligand>
</feature>
<feature type="binding site" evidence="1">
    <location>
        <position position="142"/>
    </location>
    <ligand>
        <name>Fe cation</name>
        <dbReference type="ChEBI" id="CHEBI:24875"/>
        <label>2</label>
    </ligand>
</feature>
<feature type="binding site" evidence="1">
    <location>
        <position position="174"/>
    </location>
    <ligand>
        <name>Fe cation</name>
        <dbReference type="ChEBI" id="CHEBI:24875"/>
        <label>1</label>
    </ligand>
</feature>
<feature type="binding site" evidence="1">
    <location>
        <position position="174"/>
    </location>
    <ligand>
        <name>Fe cation</name>
        <dbReference type="ChEBI" id="CHEBI:24875"/>
        <label>2</label>
    </ligand>
</feature>
<feature type="binding site" evidence="1">
    <location>
        <position position="177"/>
    </location>
    <ligand>
        <name>Fe cation</name>
        <dbReference type="ChEBI" id="CHEBI:24875"/>
        <label>2</label>
    </ligand>
</feature>
<evidence type="ECO:0000255" key="1">
    <source>
        <dbReference type="HAMAP-Rule" id="MF_01658"/>
    </source>
</evidence>
<evidence type="ECO:0000256" key="2">
    <source>
        <dbReference type="SAM" id="MobiDB-lite"/>
    </source>
</evidence>
<comment type="function">
    <text evidence="1">Catalyzes the hydroxylation of 2-nonaprenyl-3-methyl-6-methoxy-1,4-benzoquinol during ubiquinone biosynthesis.</text>
</comment>
<comment type="catalytic activity">
    <reaction evidence="1">
        <text>a 5-methoxy-2-methyl-3-(all-trans-polyprenyl)benzene-1,4-diol + AH2 + O2 = a 3-demethylubiquinol + A + H2O</text>
        <dbReference type="Rhea" id="RHEA:50908"/>
        <dbReference type="Rhea" id="RHEA-COMP:10859"/>
        <dbReference type="Rhea" id="RHEA-COMP:10914"/>
        <dbReference type="ChEBI" id="CHEBI:13193"/>
        <dbReference type="ChEBI" id="CHEBI:15377"/>
        <dbReference type="ChEBI" id="CHEBI:15379"/>
        <dbReference type="ChEBI" id="CHEBI:17499"/>
        <dbReference type="ChEBI" id="CHEBI:84167"/>
        <dbReference type="ChEBI" id="CHEBI:84422"/>
        <dbReference type="EC" id="1.14.99.60"/>
    </reaction>
</comment>
<comment type="cofactor">
    <cofactor evidence="1">
        <name>Fe cation</name>
        <dbReference type="ChEBI" id="CHEBI:24875"/>
    </cofactor>
    <text evidence="1">Binds 2 iron ions per subunit.</text>
</comment>
<comment type="pathway">
    <text evidence="1">Cofactor biosynthesis; ubiquinone biosynthesis.</text>
</comment>
<comment type="subcellular location">
    <subcellularLocation>
        <location evidence="1">Cell membrane</location>
        <topology evidence="1">Peripheral membrane protein</topology>
    </subcellularLocation>
</comment>
<comment type="similarity">
    <text evidence="1">Belongs to the COQ7 family.</text>
</comment>
<reference key="1">
    <citation type="submission" date="2007-12" db="EMBL/GenBank/DDBJ databases">
        <title>Complete sequence of chromosome of Francisella philomiragia subsp. philomiragia ATCC 25017.</title>
        <authorList>
            <consortium name="US DOE Joint Genome Institute"/>
            <person name="Copeland A."/>
            <person name="Lucas S."/>
            <person name="Lapidus A."/>
            <person name="Barry K."/>
            <person name="Detter J.C."/>
            <person name="Glavina del Rio T."/>
            <person name="Hammon N."/>
            <person name="Israni S."/>
            <person name="Dalin E."/>
            <person name="Tice H."/>
            <person name="Pitluck S."/>
            <person name="Chain P."/>
            <person name="Malfatti S."/>
            <person name="Shin M."/>
            <person name="Vergez L."/>
            <person name="Schmutz J."/>
            <person name="Larimer F."/>
            <person name="Land M."/>
            <person name="Hauser L."/>
            <person name="Richardson P."/>
        </authorList>
    </citation>
    <scope>NUCLEOTIDE SEQUENCE [LARGE SCALE GENOMIC DNA]</scope>
    <source>
        <strain>ATCC 25017 / CCUG 19701 / FSC 153 / O#319-036</strain>
    </source>
</reference>
<sequence length="211" mass="23760">MRKLSFLDRVVEEIDSYARFTKHPLNPNRKSPSANTVDGQLSDNDKKHAAGLMRVDYTGEICAQGLYRGQASVAKSAQTKEHLYHAADEEYDHLAWCAERLEELGAKPSLLNPFWYWASFGIGATAGSISDSLSYGFVVETEKQVMKHLDSHLKNLPVNDNRSREILKQMYLDESEHAVEAQKAGGKKLPKPVKAIMKLQSKVMTTLAYRF</sequence>
<dbReference type="EC" id="1.14.99.60" evidence="1"/>
<dbReference type="EMBL" id="CP000937">
    <property type="protein sequence ID" value="ABZ87846.1"/>
    <property type="molecule type" value="Genomic_DNA"/>
</dbReference>
<dbReference type="SMR" id="B0TZT4"/>
<dbReference type="KEGG" id="fph:Fphi_1623"/>
<dbReference type="eggNOG" id="COG2941">
    <property type="taxonomic scope" value="Bacteria"/>
</dbReference>
<dbReference type="HOGENOM" id="CLU_088601_0_0_6"/>
<dbReference type="UniPathway" id="UPA00232"/>
<dbReference type="GO" id="GO:0005886">
    <property type="term" value="C:plasma membrane"/>
    <property type="evidence" value="ECO:0007669"/>
    <property type="project" value="UniProtKB-SubCell"/>
</dbReference>
<dbReference type="GO" id="GO:0008682">
    <property type="term" value="F:3-demethoxyubiquinol 3-hydroxylase activity"/>
    <property type="evidence" value="ECO:0007669"/>
    <property type="project" value="UniProtKB-EC"/>
</dbReference>
<dbReference type="GO" id="GO:0046872">
    <property type="term" value="F:metal ion binding"/>
    <property type="evidence" value="ECO:0007669"/>
    <property type="project" value="UniProtKB-KW"/>
</dbReference>
<dbReference type="GO" id="GO:0006744">
    <property type="term" value="P:ubiquinone biosynthetic process"/>
    <property type="evidence" value="ECO:0007669"/>
    <property type="project" value="UniProtKB-UniRule"/>
</dbReference>
<dbReference type="CDD" id="cd01042">
    <property type="entry name" value="DMQH"/>
    <property type="match status" value="1"/>
</dbReference>
<dbReference type="Gene3D" id="1.20.1260.10">
    <property type="match status" value="1"/>
</dbReference>
<dbReference type="HAMAP" id="MF_01658">
    <property type="entry name" value="COQ7"/>
    <property type="match status" value="1"/>
</dbReference>
<dbReference type="InterPro" id="IPR047809">
    <property type="entry name" value="COQ7_proteobact"/>
</dbReference>
<dbReference type="InterPro" id="IPR012347">
    <property type="entry name" value="Ferritin-like"/>
</dbReference>
<dbReference type="InterPro" id="IPR009078">
    <property type="entry name" value="Ferritin-like_SF"/>
</dbReference>
<dbReference type="InterPro" id="IPR011566">
    <property type="entry name" value="Ubq_synth_Coq7"/>
</dbReference>
<dbReference type="NCBIfam" id="NF033656">
    <property type="entry name" value="DMQ_monoox_COQ7"/>
    <property type="match status" value="1"/>
</dbReference>
<dbReference type="PANTHER" id="PTHR11237:SF4">
    <property type="entry name" value="5-DEMETHOXYUBIQUINONE HYDROXYLASE, MITOCHONDRIAL"/>
    <property type="match status" value="1"/>
</dbReference>
<dbReference type="PANTHER" id="PTHR11237">
    <property type="entry name" value="COENZYME Q10 BIOSYNTHESIS PROTEIN 7"/>
    <property type="match status" value="1"/>
</dbReference>
<dbReference type="Pfam" id="PF03232">
    <property type="entry name" value="COQ7"/>
    <property type="match status" value="1"/>
</dbReference>
<dbReference type="SUPFAM" id="SSF47240">
    <property type="entry name" value="Ferritin-like"/>
    <property type="match status" value="1"/>
</dbReference>